<reference key="1">
    <citation type="submission" date="2007-04" db="EMBL/GenBank/DDBJ databases">
        <title>Complete sequence of Pseudomonas mendocina ymp.</title>
        <authorList>
            <consortium name="US DOE Joint Genome Institute"/>
            <person name="Copeland A."/>
            <person name="Lucas S."/>
            <person name="Lapidus A."/>
            <person name="Barry K."/>
            <person name="Glavina del Rio T."/>
            <person name="Dalin E."/>
            <person name="Tice H."/>
            <person name="Pitluck S."/>
            <person name="Kiss H."/>
            <person name="Brettin T."/>
            <person name="Detter J.C."/>
            <person name="Bruce D."/>
            <person name="Han C."/>
            <person name="Schmutz J."/>
            <person name="Larimer F."/>
            <person name="Land M."/>
            <person name="Hauser L."/>
            <person name="Kyrpides N."/>
            <person name="Mikhailova N."/>
            <person name="Hersman L."/>
            <person name="Dubois J."/>
            <person name="Maurice P."/>
            <person name="Richardson P."/>
        </authorList>
    </citation>
    <scope>NUCLEOTIDE SEQUENCE [LARGE SCALE GENOMIC DNA]</scope>
    <source>
        <strain>ymp</strain>
    </source>
</reference>
<feature type="chain" id="PRO_1000013411" description="Large ribosomal subunit protein bL34">
    <location>
        <begin position="1"/>
        <end position="44"/>
    </location>
</feature>
<keyword id="KW-0687">Ribonucleoprotein</keyword>
<keyword id="KW-0689">Ribosomal protein</keyword>
<proteinExistence type="inferred from homology"/>
<name>RL34_ECTM1</name>
<protein>
    <recommendedName>
        <fullName evidence="1">Large ribosomal subunit protein bL34</fullName>
    </recommendedName>
    <alternativeName>
        <fullName evidence="2">50S ribosomal protein L34</fullName>
    </alternativeName>
</protein>
<evidence type="ECO:0000255" key="1">
    <source>
        <dbReference type="HAMAP-Rule" id="MF_00391"/>
    </source>
</evidence>
<evidence type="ECO:0000305" key="2"/>
<organism>
    <name type="scientific">Ectopseudomonas mendocina (strain ymp)</name>
    <name type="common">Pseudomonas mendocina</name>
    <dbReference type="NCBI Taxonomy" id="399739"/>
    <lineage>
        <taxon>Bacteria</taxon>
        <taxon>Pseudomonadati</taxon>
        <taxon>Pseudomonadota</taxon>
        <taxon>Gammaproteobacteria</taxon>
        <taxon>Pseudomonadales</taxon>
        <taxon>Pseudomonadaceae</taxon>
        <taxon>Ectopseudomonas</taxon>
    </lineage>
</organism>
<dbReference type="EMBL" id="CP000680">
    <property type="protein sequence ID" value="ABP87369.1"/>
    <property type="molecule type" value="Genomic_DNA"/>
</dbReference>
<dbReference type="SMR" id="A4Y1A3"/>
<dbReference type="STRING" id="399739.Pmen_4623"/>
<dbReference type="KEGG" id="pmy:Pmen_4623"/>
<dbReference type="eggNOG" id="COG0230">
    <property type="taxonomic scope" value="Bacteria"/>
</dbReference>
<dbReference type="HOGENOM" id="CLU_129938_2_0_6"/>
<dbReference type="OrthoDB" id="9804164at2"/>
<dbReference type="GO" id="GO:1990904">
    <property type="term" value="C:ribonucleoprotein complex"/>
    <property type="evidence" value="ECO:0007669"/>
    <property type="project" value="UniProtKB-KW"/>
</dbReference>
<dbReference type="GO" id="GO:0005840">
    <property type="term" value="C:ribosome"/>
    <property type="evidence" value="ECO:0007669"/>
    <property type="project" value="UniProtKB-KW"/>
</dbReference>
<dbReference type="GO" id="GO:0003735">
    <property type="term" value="F:structural constituent of ribosome"/>
    <property type="evidence" value="ECO:0007669"/>
    <property type="project" value="InterPro"/>
</dbReference>
<dbReference type="GO" id="GO:0006412">
    <property type="term" value="P:translation"/>
    <property type="evidence" value="ECO:0007669"/>
    <property type="project" value="UniProtKB-UniRule"/>
</dbReference>
<dbReference type="FunFam" id="1.10.287.3980:FF:000001">
    <property type="entry name" value="Mitochondrial ribosomal protein L34"/>
    <property type="match status" value="1"/>
</dbReference>
<dbReference type="Gene3D" id="1.10.287.3980">
    <property type="match status" value="1"/>
</dbReference>
<dbReference type="HAMAP" id="MF_00391">
    <property type="entry name" value="Ribosomal_bL34"/>
    <property type="match status" value="1"/>
</dbReference>
<dbReference type="InterPro" id="IPR000271">
    <property type="entry name" value="Ribosomal_bL34"/>
</dbReference>
<dbReference type="InterPro" id="IPR020939">
    <property type="entry name" value="Ribosomal_bL34_CS"/>
</dbReference>
<dbReference type="NCBIfam" id="TIGR01030">
    <property type="entry name" value="rpmH_bact"/>
    <property type="match status" value="1"/>
</dbReference>
<dbReference type="PANTHER" id="PTHR14503:SF4">
    <property type="entry name" value="LARGE RIBOSOMAL SUBUNIT PROTEIN BL34M"/>
    <property type="match status" value="1"/>
</dbReference>
<dbReference type="PANTHER" id="PTHR14503">
    <property type="entry name" value="MITOCHONDRIAL RIBOSOMAL PROTEIN 34 FAMILY MEMBER"/>
    <property type="match status" value="1"/>
</dbReference>
<dbReference type="Pfam" id="PF00468">
    <property type="entry name" value="Ribosomal_L34"/>
    <property type="match status" value="1"/>
</dbReference>
<dbReference type="PROSITE" id="PS00784">
    <property type="entry name" value="RIBOSOMAL_L34"/>
    <property type="match status" value="1"/>
</dbReference>
<accession>A4Y1A3</accession>
<comment type="similarity">
    <text evidence="1">Belongs to the bacterial ribosomal protein bL34 family.</text>
</comment>
<sequence>MKRTFQPSTIKRARTHGFRARMATKNGRAVLSRRRAKGRKRLTV</sequence>
<gene>
    <name evidence="1" type="primary">rpmH</name>
    <name type="ordered locus">Pmen_4623</name>
</gene>